<dbReference type="EMBL" id="DQ012031">
    <property type="protein sequence ID" value="AAY59767.1"/>
    <property type="molecule type" value="mRNA"/>
</dbReference>
<dbReference type="EMBL" id="AK079000">
    <property type="protein sequence ID" value="BAC37500.1"/>
    <property type="status" value="ALT_INIT"/>
    <property type="molecule type" value="mRNA"/>
</dbReference>
<dbReference type="EMBL" id="AL844517">
    <property type="status" value="NOT_ANNOTATED_CDS"/>
    <property type="molecule type" value="Genomic_DNA"/>
</dbReference>
<dbReference type="CCDS" id="CCDS38275.1"/>
<dbReference type="RefSeq" id="NP_795924.2">
    <property type="nucleotide sequence ID" value="NM_176950.4"/>
</dbReference>
<dbReference type="SMR" id="Q30KP3"/>
<dbReference type="FunCoup" id="Q30KP3">
    <property type="interactions" value="1"/>
</dbReference>
<dbReference type="STRING" id="10090.ENSMUSP00000105462"/>
<dbReference type="PaxDb" id="10090-ENSMUSP00000105462"/>
<dbReference type="ProteomicsDB" id="279520"/>
<dbReference type="Antibodypedia" id="82036">
    <property type="antibodies" value="1 antibodies from 1 providers"/>
</dbReference>
<dbReference type="DNASU" id="319579"/>
<dbReference type="Ensembl" id="ENSMUST00000109836.3">
    <property type="protein sequence ID" value="ENSMUSP00000105462.3"/>
    <property type="gene ID" value="ENSMUSG00000049560.5"/>
</dbReference>
<dbReference type="GeneID" id="319579"/>
<dbReference type="KEGG" id="mmu:319579"/>
<dbReference type="UCSC" id="uc008nfm.1">
    <property type="organism name" value="mouse"/>
</dbReference>
<dbReference type="AGR" id="MGI:2442320"/>
<dbReference type="CTD" id="319579"/>
<dbReference type="MGI" id="MGI:2442320">
    <property type="gene designation" value="Defb20"/>
</dbReference>
<dbReference type="VEuPathDB" id="HostDB:ENSMUSG00000049560"/>
<dbReference type="eggNOG" id="ENOG502TM18">
    <property type="taxonomic scope" value="Eukaryota"/>
</dbReference>
<dbReference type="GeneTree" id="ENSGT00530000064329"/>
<dbReference type="HOGENOM" id="CLU_2399087_0_0_1"/>
<dbReference type="InParanoid" id="Q30KP3"/>
<dbReference type="OMA" id="ISEMGCL"/>
<dbReference type="OrthoDB" id="9831336at2759"/>
<dbReference type="PhylomeDB" id="Q30KP3"/>
<dbReference type="BioGRID-ORCS" id="319579">
    <property type="hits" value="2 hits in 76 CRISPR screens"/>
</dbReference>
<dbReference type="PRO" id="PR:Q30KP3"/>
<dbReference type="Proteomes" id="UP000000589">
    <property type="component" value="Chromosome 2"/>
</dbReference>
<dbReference type="RNAct" id="Q30KP3">
    <property type="molecule type" value="protein"/>
</dbReference>
<dbReference type="Bgee" id="ENSMUSG00000049560">
    <property type="expression patterns" value="Expressed in epiblast cell in embryo and 3 other cell types or tissues"/>
</dbReference>
<dbReference type="GO" id="GO:0005576">
    <property type="term" value="C:extracellular region"/>
    <property type="evidence" value="ECO:0007669"/>
    <property type="project" value="UniProtKB-SubCell"/>
</dbReference>
<dbReference type="GO" id="GO:0042742">
    <property type="term" value="P:defense response to bacterium"/>
    <property type="evidence" value="ECO:0007669"/>
    <property type="project" value="UniProtKB-KW"/>
</dbReference>
<dbReference type="GO" id="GO:0045087">
    <property type="term" value="P:innate immune response"/>
    <property type="evidence" value="ECO:0007669"/>
    <property type="project" value="InterPro"/>
</dbReference>
<dbReference type="InterPro" id="IPR050544">
    <property type="entry name" value="Beta-defensin"/>
</dbReference>
<dbReference type="InterPro" id="IPR025933">
    <property type="entry name" value="Beta_defensin_dom"/>
</dbReference>
<dbReference type="PANTHER" id="PTHR15001:SF3">
    <property type="entry name" value="BETA-DEFENSIN 123"/>
    <property type="match status" value="1"/>
</dbReference>
<dbReference type="PANTHER" id="PTHR15001">
    <property type="entry name" value="BETA-DEFENSIN 123-RELATED"/>
    <property type="match status" value="1"/>
</dbReference>
<dbReference type="Pfam" id="PF13841">
    <property type="entry name" value="Defensin_beta_2"/>
    <property type="match status" value="1"/>
</dbReference>
<gene>
    <name type="primary">Defb20</name>
</gene>
<keyword id="KW-0044">Antibiotic</keyword>
<keyword id="KW-0929">Antimicrobial</keyword>
<keyword id="KW-0211">Defensin</keyword>
<keyword id="KW-1015">Disulfide bond</keyword>
<keyword id="KW-1185">Reference proteome</keyword>
<keyword id="KW-0964">Secreted</keyword>
<keyword id="KW-0732">Signal</keyword>
<reference key="1">
    <citation type="journal article" date="2005" name="Physiol. Genomics">
        <title>Cross-species analysis of the mammalian beta-defensin gene family: presence of syntenic gene clusters and preferential expression in the male reproductive tract.</title>
        <authorList>
            <person name="Patil A.A."/>
            <person name="Cai Y."/>
            <person name="Sang Y."/>
            <person name="Blecha F."/>
            <person name="Zhang G."/>
        </authorList>
    </citation>
    <scope>NUCLEOTIDE SEQUENCE [MRNA]</scope>
</reference>
<reference key="2">
    <citation type="journal article" date="2005" name="Science">
        <title>The transcriptional landscape of the mammalian genome.</title>
        <authorList>
            <person name="Carninci P."/>
            <person name="Kasukawa T."/>
            <person name="Katayama S."/>
            <person name="Gough J."/>
            <person name="Frith M.C."/>
            <person name="Maeda N."/>
            <person name="Oyama R."/>
            <person name="Ravasi T."/>
            <person name="Lenhard B."/>
            <person name="Wells C."/>
            <person name="Kodzius R."/>
            <person name="Shimokawa K."/>
            <person name="Bajic V.B."/>
            <person name="Brenner S.E."/>
            <person name="Batalov S."/>
            <person name="Forrest A.R."/>
            <person name="Zavolan M."/>
            <person name="Davis M.J."/>
            <person name="Wilming L.G."/>
            <person name="Aidinis V."/>
            <person name="Allen J.E."/>
            <person name="Ambesi-Impiombato A."/>
            <person name="Apweiler R."/>
            <person name="Aturaliya R.N."/>
            <person name="Bailey T.L."/>
            <person name="Bansal M."/>
            <person name="Baxter L."/>
            <person name="Beisel K.W."/>
            <person name="Bersano T."/>
            <person name="Bono H."/>
            <person name="Chalk A.M."/>
            <person name="Chiu K.P."/>
            <person name="Choudhary V."/>
            <person name="Christoffels A."/>
            <person name="Clutterbuck D.R."/>
            <person name="Crowe M.L."/>
            <person name="Dalla E."/>
            <person name="Dalrymple B.P."/>
            <person name="de Bono B."/>
            <person name="Della Gatta G."/>
            <person name="di Bernardo D."/>
            <person name="Down T."/>
            <person name="Engstrom P."/>
            <person name="Fagiolini M."/>
            <person name="Faulkner G."/>
            <person name="Fletcher C.F."/>
            <person name="Fukushima T."/>
            <person name="Furuno M."/>
            <person name="Futaki S."/>
            <person name="Gariboldi M."/>
            <person name="Georgii-Hemming P."/>
            <person name="Gingeras T.R."/>
            <person name="Gojobori T."/>
            <person name="Green R.E."/>
            <person name="Gustincich S."/>
            <person name="Harbers M."/>
            <person name="Hayashi Y."/>
            <person name="Hensch T.K."/>
            <person name="Hirokawa N."/>
            <person name="Hill D."/>
            <person name="Huminiecki L."/>
            <person name="Iacono M."/>
            <person name="Ikeo K."/>
            <person name="Iwama A."/>
            <person name="Ishikawa T."/>
            <person name="Jakt M."/>
            <person name="Kanapin A."/>
            <person name="Katoh M."/>
            <person name="Kawasawa Y."/>
            <person name="Kelso J."/>
            <person name="Kitamura H."/>
            <person name="Kitano H."/>
            <person name="Kollias G."/>
            <person name="Krishnan S.P."/>
            <person name="Kruger A."/>
            <person name="Kummerfeld S.K."/>
            <person name="Kurochkin I.V."/>
            <person name="Lareau L.F."/>
            <person name="Lazarevic D."/>
            <person name="Lipovich L."/>
            <person name="Liu J."/>
            <person name="Liuni S."/>
            <person name="McWilliam S."/>
            <person name="Madan Babu M."/>
            <person name="Madera M."/>
            <person name="Marchionni L."/>
            <person name="Matsuda H."/>
            <person name="Matsuzawa S."/>
            <person name="Miki H."/>
            <person name="Mignone F."/>
            <person name="Miyake S."/>
            <person name="Morris K."/>
            <person name="Mottagui-Tabar S."/>
            <person name="Mulder N."/>
            <person name="Nakano N."/>
            <person name="Nakauchi H."/>
            <person name="Ng P."/>
            <person name="Nilsson R."/>
            <person name="Nishiguchi S."/>
            <person name="Nishikawa S."/>
            <person name="Nori F."/>
            <person name="Ohara O."/>
            <person name="Okazaki Y."/>
            <person name="Orlando V."/>
            <person name="Pang K.C."/>
            <person name="Pavan W.J."/>
            <person name="Pavesi G."/>
            <person name="Pesole G."/>
            <person name="Petrovsky N."/>
            <person name="Piazza S."/>
            <person name="Reed J."/>
            <person name="Reid J.F."/>
            <person name="Ring B.Z."/>
            <person name="Ringwald M."/>
            <person name="Rost B."/>
            <person name="Ruan Y."/>
            <person name="Salzberg S.L."/>
            <person name="Sandelin A."/>
            <person name="Schneider C."/>
            <person name="Schoenbach C."/>
            <person name="Sekiguchi K."/>
            <person name="Semple C.A."/>
            <person name="Seno S."/>
            <person name="Sessa L."/>
            <person name="Sheng Y."/>
            <person name="Shibata Y."/>
            <person name="Shimada H."/>
            <person name="Shimada K."/>
            <person name="Silva D."/>
            <person name="Sinclair B."/>
            <person name="Sperling S."/>
            <person name="Stupka E."/>
            <person name="Sugiura K."/>
            <person name="Sultana R."/>
            <person name="Takenaka Y."/>
            <person name="Taki K."/>
            <person name="Tammoja K."/>
            <person name="Tan S.L."/>
            <person name="Tang S."/>
            <person name="Taylor M.S."/>
            <person name="Tegner J."/>
            <person name="Teichmann S.A."/>
            <person name="Ueda H.R."/>
            <person name="van Nimwegen E."/>
            <person name="Verardo R."/>
            <person name="Wei C.L."/>
            <person name="Yagi K."/>
            <person name="Yamanishi H."/>
            <person name="Zabarovsky E."/>
            <person name="Zhu S."/>
            <person name="Zimmer A."/>
            <person name="Hide W."/>
            <person name="Bult C."/>
            <person name="Grimmond S.M."/>
            <person name="Teasdale R.D."/>
            <person name="Liu E.T."/>
            <person name="Brusic V."/>
            <person name="Quackenbush J."/>
            <person name="Wahlestedt C."/>
            <person name="Mattick J.S."/>
            <person name="Hume D.A."/>
            <person name="Kai C."/>
            <person name="Sasaki D."/>
            <person name="Tomaru Y."/>
            <person name="Fukuda S."/>
            <person name="Kanamori-Katayama M."/>
            <person name="Suzuki M."/>
            <person name="Aoki J."/>
            <person name="Arakawa T."/>
            <person name="Iida J."/>
            <person name="Imamura K."/>
            <person name="Itoh M."/>
            <person name="Kato T."/>
            <person name="Kawaji H."/>
            <person name="Kawagashira N."/>
            <person name="Kawashima T."/>
            <person name="Kojima M."/>
            <person name="Kondo S."/>
            <person name="Konno H."/>
            <person name="Nakano K."/>
            <person name="Ninomiya N."/>
            <person name="Nishio T."/>
            <person name="Okada M."/>
            <person name="Plessy C."/>
            <person name="Shibata K."/>
            <person name="Shiraki T."/>
            <person name="Suzuki S."/>
            <person name="Tagami M."/>
            <person name="Waki K."/>
            <person name="Watahiki A."/>
            <person name="Okamura-Oho Y."/>
            <person name="Suzuki H."/>
            <person name="Kawai J."/>
            <person name="Hayashizaki Y."/>
        </authorList>
    </citation>
    <scope>NUCLEOTIDE SEQUENCE [LARGE SCALE MRNA]</scope>
    <source>
        <strain>C57BL/6J</strain>
        <tissue>Epididymis</tissue>
    </source>
</reference>
<reference key="3">
    <citation type="journal article" date="2009" name="PLoS Biol.">
        <title>Lineage-specific biology revealed by a finished genome assembly of the mouse.</title>
        <authorList>
            <person name="Church D.M."/>
            <person name="Goodstadt L."/>
            <person name="Hillier L.W."/>
            <person name="Zody M.C."/>
            <person name="Goldstein S."/>
            <person name="She X."/>
            <person name="Bult C.J."/>
            <person name="Agarwala R."/>
            <person name="Cherry J.L."/>
            <person name="DiCuccio M."/>
            <person name="Hlavina W."/>
            <person name="Kapustin Y."/>
            <person name="Meric P."/>
            <person name="Maglott D."/>
            <person name="Birtle Z."/>
            <person name="Marques A.C."/>
            <person name="Graves T."/>
            <person name="Zhou S."/>
            <person name="Teague B."/>
            <person name="Potamousis K."/>
            <person name="Churas C."/>
            <person name="Place M."/>
            <person name="Herschleb J."/>
            <person name="Runnheim R."/>
            <person name="Forrest D."/>
            <person name="Amos-Landgraf J."/>
            <person name="Schwartz D.C."/>
            <person name="Cheng Z."/>
            <person name="Lindblad-Toh K."/>
            <person name="Eichler E.E."/>
            <person name="Ponting C.P."/>
        </authorList>
    </citation>
    <scope>NUCLEOTIDE SEQUENCE [LARGE SCALE GENOMIC DNA]</scope>
    <source>
        <strain>C57BL/6J</strain>
    </source>
</reference>
<feature type="signal peptide" evidence="2">
    <location>
        <begin position="1"/>
        <end position="21"/>
    </location>
</feature>
<feature type="chain" id="PRO_0000352705" description="Beta-defensin 20">
    <location>
        <begin position="22"/>
        <end position="96"/>
    </location>
</feature>
<feature type="disulfide bond" evidence="1">
    <location>
        <begin position="24"/>
        <end position="52"/>
    </location>
</feature>
<feature type="disulfide bond" evidence="1">
    <location>
        <begin position="32"/>
        <end position="46"/>
    </location>
</feature>
<feature type="disulfide bond" evidence="1">
    <location>
        <begin position="36"/>
        <end position="53"/>
    </location>
</feature>
<name>DFB20_MOUSE</name>
<accession>Q30KP3</accession>
<accession>Q8C5A7</accession>
<comment type="function">
    <text evidence="1">Has antibacterial activity.</text>
</comment>
<comment type="subcellular location">
    <subcellularLocation>
        <location evidence="1">Secreted</location>
    </subcellularLocation>
</comment>
<comment type="similarity">
    <text evidence="3">Belongs to the beta-defensin family.</text>
</comment>
<comment type="sequence caution" evidence="3">
    <conflict type="erroneous initiation">
        <sequence resource="EMBL-CDS" id="BAC37500"/>
    </conflict>
</comment>
<organism>
    <name type="scientific">Mus musculus</name>
    <name type="common">Mouse</name>
    <dbReference type="NCBI Taxonomy" id="10090"/>
    <lineage>
        <taxon>Eukaryota</taxon>
        <taxon>Metazoa</taxon>
        <taxon>Chordata</taxon>
        <taxon>Craniata</taxon>
        <taxon>Vertebrata</taxon>
        <taxon>Euteleostomi</taxon>
        <taxon>Mammalia</taxon>
        <taxon>Eutheria</taxon>
        <taxon>Euarchontoglires</taxon>
        <taxon>Glires</taxon>
        <taxon>Rodentia</taxon>
        <taxon>Myomorpha</taxon>
        <taxon>Muroidea</taxon>
        <taxon>Muridae</taxon>
        <taxon>Murinae</taxon>
        <taxon>Mus</taxon>
        <taxon>Mus</taxon>
    </lineage>
</organism>
<protein>
    <recommendedName>
        <fullName>Beta-defensin 20</fullName>
        <shortName>BD-20</shortName>
        <shortName>mBD-20</shortName>
    </recommendedName>
    <alternativeName>
        <fullName>Defensin, beta 20</fullName>
    </alternativeName>
</protein>
<evidence type="ECO:0000250" key="1"/>
<evidence type="ECO:0000255" key="2"/>
<evidence type="ECO:0000305" key="3"/>
<sequence length="96" mass="11039">MKLLQVLLVLLFVALADGAQPKRCFSNVEGYCRKKCRLVEISEMGCLHGKYCCVNELENKKHKKHSVVEETVKLQDKSKVQDYMILPTVTYYTISI</sequence>
<proteinExistence type="inferred from homology"/>